<accession>B4U1C2</accession>
<comment type="function">
    <text evidence="1">Component of the acetyl coenzyme A carboxylase (ACC) complex. First, biotin carboxylase catalyzes the carboxylation of biotin on its carrier protein (BCCP) and then the CO(2) group is transferred by the carboxyltransferase to acetyl-CoA to form malonyl-CoA.</text>
</comment>
<comment type="catalytic activity">
    <reaction evidence="1">
        <text>N(6)-carboxybiotinyl-L-lysyl-[protein] + acetyl-CoA = N(6)-biotinyl-L-lysyl-[protein] + malonyl-CoA</text>
        <dbReference type="Rhea" id="RHEA:54728"/>
        <dbReference type="Rhea" id="RHEA-COMP:10505"/>
        <dbReference type="Rhea" id="RHEA-COMP:10506"/>
        <dbReference type="ChEBI" id="CHEBI:57288"/>
        <dbReference type="ChEBI" id="CHEBI:57384"/>
        <dbReference type="ChEBI" id="CHEBI:83144"/>
        <dbReference type="ChEBI" id="CHEBI:83145"/>
        <dbReference type="EC" id="2.1.3.15"/>
    </reaction>
</comment>
<comment type="pathway">
    <text evidence="1">Lipid metabolism; malonyl-CoA biosynthesis; malonyl-CoA from acetyl-CoA: step 1/1.</text>
</comment>
<comment type="subunit">
    <text evidence="1">Acetyl-CoA carboxylase is a heterohexamer composed of biotin carboxyl carrier protein (AccB), biotin carboxylase (AccC) and two subunits each of ACCase subunit alpha (AccA) and ACCase subunit beta (AccD).</text>
</comment>
<comment type="subcellular location">
    <subcellularLocation>
        <location evidence="1">Cytoplasm</location>
    </subcellularLocation>
</comment>
<comment type="similarity">
    <text evidence="1">Belongs to the AccA family.</text>
</comment>
<proteinExistence type="inferred from homology"/>
<dbReference type="EC" id="2.1.3.15" evidence="1"/>
<dbReference type="EMBL" id="CP001129">
    <property type="protein sequence ID" value="ACG61789.1"/>
    <property type="molecule type" value="Genomic_DNA"/>
</dbReference>
<dbReference type="RefSeq" id="WP_012515065.1">
    <property type="nucleotide sequence ID" value="NC_011134.1"/>
</dbReference>
<dbReference type="SMR" id="B4U1C2"/>
<dbReference type="KEGG" id="sez:Sez_0417"/>
<dbReference type="HOGENOM" id="CLU_015486_0_2_9"/>
<dbReference type="UniPathway" id="UPA00655">
    <property type="reaction ID" value="UER00711"/>
</dbReference>
<dbReference type="Proteomes" id="UP000001873">
    <property type="component" value="Chromosome"/>
</dbReference>
<dbReference type="GO" id="GO:0009317">
    <property type="term" value="C:acetyl-CoA carboxylase complex"/>
    <property type="evidence" value="ECO:0007669"/>
    <property type="project" value="InterPro"/>
</dbReference>
<dbReference type="GO" id="GO:0003989">
    <property type="term" value="F:acetyl-CoA carboxylase activity"/>
    <property type="evidence" value="ECO:0007669"/>
    <property type="project" value="InterPro"/>
</dbReference>
<dbReference type="GO" id="GO:0005524">
    <property type="term" value="F:ATP binding"/>
    <property type="evidence" value="ECO:0007669"/>
    <property type="project" value="UniProtKB-KW"/>
</dbReference>
<dbReference type="GO" id="GO:0016743">
    <property type="term" value="F:carboxyl- or carbamoyltransferase activity"/>
    <property type="evidence" value="ECO:0007669"/>
    <property type="project" value="UniProtKB-UniRule"/>
</dbReference>
<dbReference type="GO" id="GO:0006633">
    <property type="term" value="P:fatty acid biosynthetic process"/>
    <property type="evidence" value="ECO:0007669"/>
    <property type="project" value="UniProtKB-KW"/>
</dbReference>
<dbReference type="GO" id="GO:2001295">
    <property type="term" value="P:malonyl-CoA biosynthetic process"/>
    <property type="evidence" value="ECO:0007669"/>
    <property type="project" value="UniProtKB-UniRule"/>
</dbReference>
<dbReference type="Gene3D" id="3.90.226.10">
    <property type="entry name" value="2-enoyl-CoA Hydratase, Chain A, domain 1"/>
    <property type="match status" value="1"/>
</dbReference>
<dbReference type="HAMAP" id="MF_00823">
    <property type="entry name" value="AcetylCoA_CT_alpha"/>
    <property type="match status" value="1"/>
</dbReference>
<dbReference type="InterPro" id="IPR001095">
    <property type="entry name" value="Acetyl_CoA_COase_a_su"/>
</dbReference>
<dbReference type="InterPro" id="IPR029045">
    <property type="entry name" value="ClpP/crotonase-like_dom_sf"/>
</dbReference>
<dbReference type="InterPro" id="IPR011763">
    <property type="entry name" value="COA_CT_C"/>
</dbReference>
<dbReference type="NCBIfam" id="TIGR00513">
    <property type="entry name" value="accA"/>
    <property type="match status" value="1"/>
</dbReference>
<dbReference type="NCBIfam" id="NF041504">
    <property type="entry name" value="AccA_sub"/>
    <property type="match status" value="1"/>
</dbReference>
<dbReference type="NCBIfam" id="NF004344">
    <property type="entry name" value="PRK05724.1"/>
    <property type="match status" value="1"/>
</dbReference>
<dbReference type="NCBIfam" id="NF008971">
    <property type="entry name" value="PRK12319.1"/>
    <property type="match status" value="1"/>
</dbReference>
<dbReference type="PANTHER" id="PTHR42853">
    <property type="entry name" value="ACETYL-COENZYME A CARBOXYLASE CARBOXYL TRANSFERASE SUBUNIT ALPHA"/>
    <property type="match status" value="1"/>
</dbReference>
<dbReference type="PANTHER" id="PTHR42853:SF3">
    <property type="entry name" value="ACETYL-COENZYME A CARBOXYLASE CARBOXYL TRANSFERASE SUBUNIT ALPHA, CHLOROPLASTIC"/>
    <property type="match status" value="1"/>
</dbReference>
<dbReference type="Pfam" id="PF03255">
    <property type="entry name" value="ACCA"/>
    <property type="match status" value="1"/>
</dbReference>
<dbReference type="PRINTS" id="PR01069">
    <property type="entry name" value="ACCCTRFRASEA"/>
</dbReference>
<dbReference type="SUPFAM" id="SSF52096">
    <property type="entry name" value="ClpP/crotonase"/>
    <property type="match status" value="1"/>
</dbReference>
<dbReference type="PROSITE" id="PS50989">
    <property type="entry name" value="COA_CT_CTER"/>
    <property type="match status" value="1"/>
</dbReference>
<evidence type="ECO:0000255" key="1">
    <source>
        <dbReference type="HAMAP-Rule" id="MF_00823"/>
    </source>
</evidence>
<evidence type="ECO:0000255" key="2">
    <source>
        <dbReference type="PROSITE-ProRule" id="PRU01137"/>
    </source>
</evidence>
<reference key="1">
    <citation type="journal article" date="2008" name="PLoS ONE">
        <title>Genome sequence of a lancefield group C Streptococcus zooepidemicus strain causing epidemic nephritis: new information about an old disease.</title>
        <authorList>
            <person name="Beres S.B."/>
            <person name="Sesso R."/>
            <person name="Pinto S.W.L."/>
            <person name="Hoe N.P."/>
            <person name="Porcella S.F."/>
            <person name="Deleo F.R."/>
            <person name="Musser J.M."/>
        </authorList>
    </citation>
    <scope>NUCLEOTIDE SEQUENCE [LARGE SCALE GENOMIC DNA]</scope>
    <source>
        <strain>MGCS10565</strain>
    </source>
</reference>
<gene>
    <name evidence="1" type="primary">accA</name>
    <name type="ordered locus">Sez_0417</name>
</gene>
<sequence>MTDVARILKEARDQGRMTALDYASLIFDEFMELHGDRQFADDGSIVGGIAYLADQPVTVIGIQKGKNLQDNLARNFGQPHPEGYRKALRLMKQAEKFGRPVITFINTAGAYPGVGAEERGQGEAIARNLMEMSDLKVPIIAIIIGEGGSGGALALAVADQVWMLENTMYAVLSPEGFASILWKDGSRATEAAELMKITAAELYQMGVIDRIIPERGYFSSEIIEMIRSHLIDEITQLQAKSLEELLDQRYQRFRKY</sequence>
<feature type="chain" id="PRO_1000134524" description="Acetyl-coenzyme A carboxylase carboxyl transferase subunit alpha">
    <location>
        <begin position="1"/>
        <end position="256"/>
    </location>
</feature>
<feature type="domain" description="CoA carboxyltransferase C-terminal" evidence="2">
    <location>
        <begin position="1"/>
        <end position="236"/>
    </location>
</feature>
<name>ACCA_STREM</name>
<keyword id="KW-0067">ATP-binding</keyword>
<keyword id="KW-0963">Cytoplasm</keyword>
<keyword id="KW-0275">Fatty acid biosynthesis</keyword>
<keyword id="KW-0276">Fatty acid metabolism</keyword>
<keyword id="KW-0444">Lipid biosynthesis</keyword>
<keyword id="KW-0443">Lipid metabolism</keyword>
<keyword id="KW-0547">Nucleotide-binding</keyword>
<keyword id="KW-0808">Transferase</keyword>
<protein>
    <recommendedName>
        <fullName evidence="1">Acetyl-coenzyme A carboxylase carboxyl transferase subunit alpha</fullName>
        <shortName evidence="1">ACCase subunit alpha</shortName>
        <shortName evidence="1">Acetyl-CoA carboxylase carboxyltransferase subunit alpha</shortName>
        <ecNumber evidence="1">2.1.3.15</ecNumber>
    </recommendedName>
</protein>
<organism>
    <name type="scientific">Streptococcus equi subsp. zooepidemicus (strain MGCS10565)</name>
    <dbReference type="NCBI Taxonomy" id="552526"/>
    <lineage>
        <taxon>Bacteria</taxon>
        <taxon>Bacillati</taxon>
        <taxon>Bacillota</taxon>
        <taxon>Bacilli</taxon>
        <taxon>Lactobacillales</taxon>
        <taxon>Streptococcaceae</taxon>
        <taxon>Streptococcus</taxon>
    </lineage>
</organism>